<dbReference type="EMBL" id="U34360">
    <property type="protein sequence ID" value="AAA98763.1"/>
    <property type="molecule type" value="mRNA"/>
</dbReference>
<dbReference type="EMBL" id="AC092667">
    <property type="protein sequence ID" value="AAY24278.1"/>
    <property type="molecule type" value="Genomic_DNA"/>
</dbReference>
<dbReference type="EMBL" id="AC010736">
    <property type="protein sequence ID" value="AAY14792.1"/>
    <property type="molecule type" value="Genomic_DNA"/>
</dbReference>
<dbReference type="EMBL" id="AC073118">
    <property type="protein sequence ID" value="AAY24187.1"/>
    <property type="molecule type" value="Genomic_DNA"/>
</dbReference>
<dbReference type="EMBL" id="AC018690">
    <property type="protein sequence ID" value="AAY24315.1"/>
    <property type="molecule type" value="Genomic_DNA"/>
</dbReference>
<dbReference type="EMBL" id="CH471127">
    <property type="protein sequence ID" value="EAX01854.1"/>
    <property type="molecule type" value="Genomic_DNA"/>
</dbReference>
<dbReference type="EMBL" id="CH471127">
    <property type="protein sequence ID" value="EAX01855.1"/>
    <property type="molecule type" value="Genomic_DNA"/>
</dbReference>
<dbReference type="EMBL" id="CH471127">
    <property type="protein sequence ID" value="EAX01856.1"/>
    <property type="molecule type" value="Genomic_DNA"/>
</dbReference>
<dbReference type="EMBL" id="CH471127">
    <property type="protein sequence ID" value="EAX01857.1"/>
    <property type="molecule type" value="Genomic_DNA"/>
</dbReference>
<dbReference type="EMBL" id="CH471127">
    <property type="protein sequence ID" value="EAX01858.1"/>
    <property type="molecule type" value="Genomic_DNA"/>
</dbReference>
<dbReference type="EMBL" id="CH471127">
    <property type="protein sequence ID" value="EAX01859.1"/>
    <property type="molecule type" value="Genomic_DNA"/>
</dbReference>
<dbReference type="EMBL" id="BC036895">
    <property type="protein sequence ID" value="AAH36895.1"/>
    <property type="molecule type" value="mRNA"/>
</dbReference>
<dbReference type="EMBL" id="BC136579">
    <property type="protein sequence ID" value="AAI36580.1"/>
    <property type="molecule type" value="mRNA"/>
</dbReference>
<dbReference type="EMBL" id="BC144266">
    <property type="protein sequence ID" value="AAI44267.1"/>
    <property type="molecule type" value="mRNA"/>
</dbReference>
<dbReference type="EMBL" id="AB209634">
    <property type="protein sequence ID" value="BAD92871.1"/>
    <property type="molecule type" value="mRNA"/>
</dbReference>
<dbReference type="CCDS" id="CCDS33258.1">
    <molecule id="P51826-2"/>
</dbReference>
<dbReference type="CCDS" id="CCDS42723.1">
    <molecule id="P51826-1"/>
</dbReference>
<dbReference type="RefSeq" id="NP_001020279.1">
    <molecule id="P51826-2"/>
    <property type="nucleotide sequence ID" value="NM_001025108.2"/>
</dbReference>
<dbReference type="RefSeq" id="NP_001373064.1">
    <molecule id="P51826-1"/>
    <property type="nucleotide sequence ID" value="NM_001386135.1"/>
</dbReference>
<dbReference type="RefSeq" id="NP_002276.2">
    <molecule id="P51826-1"/>
    <property type="nucleotide sequence ID" value="NM_002285.3"/>
</dbReference>
<dbReference type="RefSeq" id="XP_005264000.2">
    <molecule id="P51826-1"/>
    <property type="nucleotide sequence ID" value="XM_005263943.5"/>
</dbReference>
<dbReference type="RefSeq" id="XP_011509475.1">
    <property type="nucleotide sequence ID" value="XM_011511173.2"/>
</dbReference>
<dbReference type="RefSeq" id="XP_011509476.1">
    <molecule id="P51826-2"/>
    <property type="nucleotide sequence ID" value="XM_011511174.4"/>
</dbReference>
<dbReference type="RefSeq" id="XP_011509477.1">
    <property type="nucleotide sequence ID" value="XM_011511175.2"/>
</dbReference>
<dbReference type="RefSeq" id="XP_011509478.1">
    <property type="nucleotide sequence ID" value="XM_011511176.2"/>
</dbReference>
<dbReference type="RefSeq" id="XP_011509479.1">
    <property type="nucleotide sequence ID" value="XM_011511177.2"/>
</dbReference>
<dbReference type="RefSeq" id="XP_047300236.1">
    <molecule id="P51826-2"/>
    <property type="nucleotide sequence ID" value="XM_047444280.1"/>
</dbReference>
<dbReference type="RefSeq" id="XP_047300237.1">
    <molecule id="P51826-2"/>
    <property type="nucleotide sequence ID" value="XM_047444281.1"/>
</dbReference>
<dbReference type="RefSeq" id="XP_047300239.1">
    <molecule id="P51826-1"/>
    <property type="nucleotide sequence ID" value="XM_047444283.1"/>
</dbReference>
<dbReference type="RefSeq" id="XP_054197967.1">
    <molecule id="P51826-2"/>
    <property type="nucleotide sequence ID" value="XM_054341992.1"/>
</dbReference>
<dbReference type="RefSeq" id="XP_054197968.1">
    <molecule id="P51826-2"/>
    <property type="nucleotide sequence ID" value="XM_054341993.1"/>
</dbReference>
<dbReference type="RefSeq" id="XP_054197969.1">
    <molecule id="P51826-2"/>
    <property type="nucleotide sequence ID" value="XM_054341994.1"/>
</dbReference>
<dbReference type="RefSeq" id="XP_054197970.1">
    <molecule id="P51826-2"/>
    <property type="nucleotide sequence ID" value="XM_054341995.1"/>
</dbReference>
<dbReference type="RefSeq" id="XP_054197972.1">
    <molecule id="P51826-1"/>
    <property type="nucleotide sequence ID" value="XM_054341997.1"/>
</dbReference>
<dbReference type="SMR" id="P51826"/>
<dbReference type="BioGRID" id="110096">
    <property type="interactions" value="15"/>
</dbReference>
<dbReference type="FunCoup" id="P51826">
    <property type="interactions" value="1941"/>
</dbReference>
<dbReference type="IntAct" id="P51826">
    <property type="interactions" value="7"/>
</dbReference>
<dbReference type="STRING" id="9606.ENSP00000386834"/>
<dbReference type="GlyGen" id="P51826">
    <property type="glycosylation" value="6 sites, 1 O-linked glycan (5 sites)"/>
</dbReference>
<dbReference type="iPTMnet" id="P51826"/>
<dbReference type="PhosphoSitePlus" id="P51826"/>
<dbReference type="BioMuta" id="AFF3"/>
<dbReference type="DMDM" id="126302515"/>
<dbReference type="jPOST" id="P51826"/>
<dbReference type="MassIVE" id="P51826"/>
<dbReference type="PaxDb" id="9606-ENSP00000386834"/>
<dbReference type="PeptideAtlas" id="P51826"/>
<dbReference type="ProteomicsDB" id="56428">
    <molecule id="P51826-1"/>
</dbReference>
<dbReference type="ProteomicsDB" id="56429">
    <molecule id="P51826-2"/>
</dbReference>
<dbReference type="Antibodypedia" id="32831">
    <property type="antibodies" value="57 antibodies from 17 providers"/>
</dbReference>
<dbReference type="DNASU" id="3899"/>
<dbReference type="Ensembl" id="ENST00000317233.8">
    <molecule id="P51826-1"/>
    <property type="protein sequence ID" value="ENSP00000317421.4"/>
    <property type="gene ID" value="ENSG00000144218.21"/>
</dbReference>
<dbReference type="Ensembl" id="ENST00000409236.6">
    <molecule id="P51826-1"/>
    <property type="protein sequence ID" value="ENSP00000387207.1"/>
    <property type="gene ID" value="ENSG00000144218.21"/>
</dbReference>
<dbReference type="Ensembl" id="ENST00000409579.5">
    <molecule id="P51826-2"/>
    <property type="protein sequence ID" value="ENSP00000386834.1"/>
    <property type="gene ID" value="ENSG00000144218.21"/>
</dbReference>
<dbReference type="Ensembl" id="ENST00000672756.2">
    <molecule id="P51826-1"/>
    <property type="protein sequence ID" value="ENSP00000500419.1"/>
    <property type="gene ID" value="ENSG00000144218.21"/>
</dbReference>
<dbReference type="GeneID" id="3899"/>
<dbReference type="KEGG" id="hsa:3899"/>
<dbReference type="MANE-Select" id="ENST00000672756.2">
    <property type="protein sequence ID" value="ENSP00000500419.1"/>
    <property type="RefSeq nucleotide sequence ID" value="NM_001386135.1"/>
    <property type="RefSeq protein sequence ID" value="NP_001373064.1"/>
</dbReference>
<dbReference type="UCSC" id="uc002tag.4">
    <molecule id="P51826-1"/>
    <property type="organism name" value="human"/>
</dbReference>
<dbReference type="AGR" id="HGNC:6473"/>
<dbReference type="CTD" id="3899"/>
<dbReference type="DisGeNET" id="3899"/>
<dbReference type="GeneCards" id="AFF3"/>
<dbReference type="HGNC" id="HGNC:6473">
    <property type="gene designation" value="AFF3"/>
</dbReference>
<dbReference type="HPA" id="ENSG00000144218">
    <property type="expression patterns" value="Low tissue specificity"/>
</dbReference>
<dbReference type="MalaCards" id="AFF3"/>
<dbReference type="MIM" id="601464">
    <property type="type" value="gene"/>
</dbReference>
<dbReference type="MIM" id="619297">
    <property type="type" value="phenotype"/>
</dbReference>
<dbReference type="neXtProt" id="NX_P51826"/>
<dbReference type="OpenTargets" id="ENSG00000144218"/>
<dbReference type="Orphanet" id="632603">
    <property type="disease" value="Mesomelic dysplasia-digital anomalies-intellectual disability syndrome"/>
</dbReference>
<dbReference type="PharmGKB" id="PA30264"/>
<dbReference type="VEuPathDB" id="HostDB:ENSG00000144218"/>
<dbReference type="eggNOG" id="ENOG502QU9C">
    <property type="taxonomic scope" value="Eukaryota"/>
</dbReference>
<dbReference type="GeneTree" id="ENSGT00950000182974"/>
<dbReference type="HOGENOM" id="CLU_006484_1_1_1"/>
<dbReference type="InParanoid" id="P51826"/>
<dbReference type="OMA" id="NSHRDCK"/>
<dbReference type="OrthoDB" id="6382204at2759"/>
<dbReference type="PAN-GO" id="P51826">
    <property type="GO annotations" value="2 GO annotations based on evolutionary models"/>
</dbReference>
<dbReference type="PhylomeDB" id="P51826"/>
<dbReference type="TreeFam" id="TF326216"/>
<dbReference type="PathwayCommons" id="P51826"/>
<dbReference type="SignaLink" id="P51826"/>
<dbReference type="SIGNOR" id="P51826"/>
<dbReference type="BioGRID-ORCS" id="3899">
    <property type="hits" value="20 hits in 1148 CRISPR screens"/>
</dbReference>
<dbReference type="ChiTaRS" id="AFF3">
    <property type="organism name" value="human"/>
</dbReference>
<dbReference type="GeneWiki" id="AFF3"/>
<dbReference type="GenomeRNAi" id="3899"/>
<dbReference type="Pharos" id="P51826">
    <property type="development level" value="Tbio"/>
</dbReference>
<dbReference type="PRO" id="PR:P51826"/>
<dbReference type="Proteomes" id="UP000005640">
    <property type="component" value="Chromosome 2"/>
</dbReference>
<dbReference type="RNAct" id="P51826">
    <property type="molecule type" value="protein"/>
</dbReference>
<dbReference type="Bgee" id="ENSG00000144218">
    <property type="expression patterns" value="Expressed in cortical plate and 172 other cell types or tissues"/>
</dbReference>
<dbReference type="ExpressionAtlas" id="P51826">
    <property type="expression patterns" value="baseline and differential"/>
</dbReference>
<dbReference type="GO" id="GO:0005829">
    <property type="term" value="C:cytosol"/>
    <property type="evidence" value="ECO:0000314"/>
    <property type="project" value="HPA"/>
</dbReference>
<dbReference type="GO" id="GO:0016604">
    <property type="term" value="C:nuclear body"/>
    <property type="evidence" value="ECO:0000314"/>
    <property type="project" value="HPA"/>
</dbReference>
<dbReference type="GO" id="GO:0005654">
    <property type="term" value="C:nucleoplasm"/>
    <property type="evidence" value="ECO:0000314"/>
    <property type="project" value="HPA"/>
</dbReference>
<dbReference type="GO" id="GO:0005634">
    <property type="term" value="C:nucleus"/>
    <property type="evidence" value="ECO:0000314"/>
    <property type="project" value="BHF-UCL"/>
</dbReference>
<dbReference type="GO" id="GO:0032783">
    <property type="term" value="C:super elongation complex"/>
    <property type="evidence" value="ECO:0000318"/>
    <property type="project" value="GO_Central"/>
</dbReference>
<dbReference type="GO" id="GO:0003700">
    <property type="term" value="F:DNA-binding transcription factor activity"/>
    <property type="evidence" value="ECO:0007669"/>
    <property type="project" value="Ensembl"/>
</dbReference>
<dbReference type="GO" id="GO:0003690">
    <property type="term" value="F:double-stranded DNA binding"/>
    <property type="evidence" value="ECO:0007669"/>
    <property type="project" value="Ensembl"/>
</dbReference>
<dbReference type="GO" id="GO:0035116">
    <property type="term" value="P:embryonic hindlimb morphogenesis"/>
    <property type="evidence" value="ECO:0000315"/>
    <property type="project" value="BHF-UCL"/>
</dbReference>
<dbReference type="GO" id="GO:0010468">
    <property type="term" value="P:regulation of gene expression"/>
    <property type="evidence" value="ECO:0000318"/>
    <property type="project" value="GO_Central"/>
</dbReference>
<dbReference type="GO" id="GO:0034612">
    <property type="term" value="P:response to tumor necrosis factor"/>
    <property type="evidence" value="ECO:0000315"/>
    <property type="project" value="BHF-UCL"/>
</dbReference>
<dbReference type="Gene3D" id="6.10.250.2670">
    <property type="match status" value="1"/>
</dbReference>
<dbReference type="InterPro" id="IPR007797">
    <property type="entry name" value="AF4/FMR2"/>
</dbReference>
<dbReference type="InterPro" id="IPR043640">
    <property type="entry name" value="AF4/FMR2_CHD"/>
</dbReference>
<dbReference type="InterPro" id="IPR043639">
    <property type="entry name" value="AF4_int"/>
</dbReference>
<dbReference type="PANTHER" id="PTHR10528">
    <property type="entry name" value="AF4/FMR2 FAMILY MEMBER"/>
    <property type="match status" value="1"/>
</dbReference>
<dbReference type="PANTHER" id="PTHR10528:SF16">
    <property type="entry name" value="AF4_FMR2 FAMILY MEMBER 3"/>
    <property type="match status" value="1"/>
</dbReference>
<dbReference type="Pfam" id="PF05110">
    <property type="entry name" value="AF-4"/>
    <property type="match status" value="2"/>
</dbReference>
<dbReference type="Pfam" id="PF18875">
    <property type="entry name" value="AF4_int"/>
    <property type="match status" value="1"/>
</dbReference>
<dbReference type="Pfam" id="PF18876">
    <property type="entry name" value="AFF4_CHD"/>
    <property type="match status" value="1"/>
</dbReference>
<accession>P51826</accession>
<accession>B7ZM46</accession>
<accession>B9EGL9</accession>
<accession>D3DVI6</accession>
<accession>Q53RD6</accession>
<accession>Q53S47</accession>
<accession>Q53SI6</accession>
<accession>Q53TB9</accession>
<accession>Q59F27</accession>
<accession>Q8IWJ5</accession>
<name>AFF3_HUMAN</name>
<gene>
    <name evidence="6 8" type="primary">AFF3</name>
    <name type="synonym">LAF4</name>
</gene>
<feature type="chain" id="PRO_0000215916" description="AF4/FMR2 family member 3">
    <location>
        <begin position="1"/>
        <end position="1226"/>
    </location>
</feature>
<feature type="region of interest" description="Disordered" evidence="1">
    <location>
        <begin position="24"/>
        <end position="65"/>
    </location>
</feature>
<feature type="region of interest" description="Disordered" evidence="1">
    <location>
        <begin position="116"/>
        <end position="164"/>
    </location>
</feature>
<feature type="region of interest" description="Disordered" evidence="1">
    <location>
        <begin position="197"/>
        <end position="299"/>
    </location>
</feature>
<feature type="region of interest" description="Disordered" evidence="1">
    <location>
        <begin position="323"/>
        <end position="496"/>
    </location>
</feature>
<feature type="region of interest" description="Disordered" evidence="1">
    <location>
        <begin position="523"/>
        <end position="728"/>
    </location>
</feature>
<feature type="region of interest" description="Disordered" evidence="1">
    <location>
        <begin position="783"/>
        <end position="856"/>
    </location>
</feature>
<feature type="region of interest" description="Disordered" evidence="1">
    <location>
        <begin position="879"/>
        <end position="964"/>
    </location>
</feature>
<feature type="region of interest" description="Disordered" evidence="1">
    <location>
        <begin position="1100"/>
        <end position="1138"/>
    </location>
</feature>
<feature type="compositionally biased region" description="Basic and acidic residues" evidence="1">
    <location>
        <begin position="24"/>
        <end position="37"/>
    </location>
</feature>
<feature type="compositionally biased region" description="Polar residues" evidence="1">
    <location>
        <begin position="42"/>
        <end position="52"/>
    </location>
</feature>
<feature type="compositionally biased region" description="Low complexity" evidence="1">
    <location>
        <begin position="123"/>
        <end position="132"/>
    </location>
</feature>
<feature type="compositionally biased region" description="Polar residues" evidence="1">
    <location>
        <begin position="251"/>
        <end position="261"/>
    </location>
</feature>
<feature type="compositionally biased region" description="Polar residues" evidence="1">
    <location>
        <begin position="334"/>
        <end position="344"/>
    </location>
</feature>
<feature type="compositionally biased region" description="Low complexity" evidence="1">
    <location>
        <begin position="381"/>
        <end position="392"/>
    </location>
</feature>
<feature type="compositionally biased region" description="Polar residues" evidence="1">
    <location>
        <begin position="396"/>
        <end position="408"/>
    </location>
</feature>
<feature type="compositionally biased region" description="Low complexity" evidence="1">
    <location>
        <begin position="409"/>
        <end position="445"/>
    </location>
</feature>
<feature type="compositionally biased region" description="Polar residues" evidence="1">
    <location>
        <begin position="485"/>
        <end position="496"/>
    </location>
</feature>
<feature type="compositionally biased region" description="Basic and acidic residues" evidence="1">
    <location>
        <begin position="523"/>
        <end position="533"/>
    </location>
</feature>
<feature type="compositionally biased region" description="Low complexity" evidence="1">
    <location>
        <begin position="550"/>
        <end position="561"/>
    </location>
</feature>
<feature type="compositionally biased region" description="Low complexity" evidence="1">
    <location>
        <begin position="569"/>
        <end position="579"/>
    </location>
</feature>
<feature type="compositionally biased region" description="Basic and acidic residues" evidence="1">
    <location>
        <begin position="589"/>
        <end position="607"/>
    </location>
</feature>
<feature type="compositionally biased region" description="Low complexity" evidence="1">
    <location>
        <begin position="668"/>
        <end position="678"/>
    </location>
</feature>
<feature type="compositionally biased region" description="Polar residues" evidence="1">
    <location>
        <begin position="692"/>
        <end position="705"/>
    </location>
</feature>
<feature type="compositionally biased region" description="Basic and acidic residues" evidence="1">
    <location>
        <begin position="830"/>
        <end position="842"/>
    </location>
</feature>
<feature type="compositionally biased region" description="Polar residues" evidence="1">
    <location>
        <begin position="843"/>
        <end position="856"/>
    </location>
</feature>
<feature type="compositionally biased region" description="Polar residues" evidence="1">
    <location>
        <begin position="894"/>
        <end position="909"/>
    </location>
</feature>
<feature type="modified residue" description="Phosphoserine" evidence="9">
    <location>
        <position position="755"/>
    </location>
</feature>
<feature type="modified residue" description="Phosphoserine" evidence="9">
    <location>
        <position position="881"/>
    </location>
</feature>
<feature type="splice variant" id="VSP_041120" description="In isoform 2." evidence="5">
    <original>C</original>
    <variation>WGEDILNQRNDSLVVEFQSSASRCRS</variation>
    <location>
        <position position="18"/>
    </location>
</feature>
<feature type="sequence variant" id="VAR_085675" description="In KINS." evidence="4">
    <original>P</original>
    <variation>A</variation>
    <location>
        <position position="231"/>
    </location>
</feature>
<feature type="sequence variant" id="VAR_085676" description="In KINS." evidence="4">
    <original>P</original>
    <variation>L</variation>
    <location>
        <position position="231"/>
    </location>
</feature>
<feature type="sequence variant" id="VAR_085677" description="In KINS." evidence="4">
    <original>A</original>
    <variation>S</variation>
    <location>
        <position position="233"/>
    </location>
</feature>
<feature type="sequence variant" id="VAR_085678" description="In KINS." evidence="3 4">
    <original>A</original>
    <variation>T</variation>
    <location>
        <position position="233"/>
    </location>
</feature>
<feature type="sequence variant" id="VAR_085679" description="In KINS." evidence="4">
    <original>A</original>
    <variation>V</variation>
    <location>
        <position position="233"/>
    </location>
</feature>
<feature type="sequence variant" id="VAR_085680" description="In KINS." evidence="4">
    <original>V</original>
    <variation>G</variation>
    <location>
        <position position="235"/>
    </location>
</feature>
<feature type="sequence variant" id="VAR_030805" description="In dbSNP:rs4851223.">
    <original>N</original>
    <variation>S</variation>
    <location>
        <position position="358"/>
    </location>
</feature>
<feature type="sequence variant" id="VAR_030806" description="In dbSNP:rs1047265.">
    <original>N</original>
    <variation>S</variation>
    <location>
        <position position="494"/>
    </location>
</feature>
<feature type="sequence variant" id="VAR_080758" description="Found in a consanguineous family with intellectual disability; uncertain significance." evidence="2">
    <original>G</original>
    <variation>V</variation>
    <location>
        <position position="1215"/>
    </location>
</feature>
<feature type="sequence conflict" description="In Ref. 1; AAA98763." evidence="7" ref="1">
    <original>S</original>
    <variation>T</variation>
    <location>
        <position position="87"/>
    </location>
</feature>
<feature type="sequence conflict" description="In Ref. 1; AAA98763." evidence="7" ref="1">
    <original>S</original>
    <variation>T</variation>
    <location>
        <position position="421"/>
    </location>
</feature>
<feature type="sequence conflict" description="In Ref. 1; AAA98763." evidence="7" ref="1">
    <original>T</original>
    <variation>YL</variation>
    <location>
        <position position="1030"/>
    </location>
</feature>
<feature type="sequence conflict" description="In Ref. 1; AAA98763." evidence="7" ref="1">
    <original>M</original>
    <variation>I</variation>
    <location>
        <position position="1120"/>
    </location>
</feature>
<feature type="sequence conflict" description="In Ref. 1; AAA98763." evidence="7" ref="1">
    <original>SPA</original>
    <variation>FPG</variation>
    <location>
        <begin position="1125"/>
        <end position="1127"/>
    </location>
</feature>
<keyword id="KW-0010">Activator</keyword>
<keyword id="KW-0025">Alternative splicing</keyword>
<keyword id="KW-0225">Disease variant</keyword>
<keyword id="KW-0238">DNA-binding</keyword>
<keyword id="KW-0242">Dwarfism</keyword>
<keyword id="KW-0991">Intellectual disability</keyword>
<keyword id="KW-0539">Nucleus</keyword>
<keyword id="KW-0597">Phosphoprotein</keyword>
<keyword id="KW-1267">Proteomics identification</keyword>
<keyword id="KW-1185">Reference proteome</keyword>
<keyword id="KW-0804">Transcription</keyword>
<keyword id="KW-0805">Transcription regulation</keyword>
<proteinExistence type="evidence at protein level"/>
<protein>
    <recommendedName>
        <fullName>AF4/FMR2 family member 3</fullName>
    </recommendedName>
    <alternativeName>
        <fullName>Lymphoid nuclear protein related to AF4</fullName>
        <shortName>Protein LAF-4</shortName>
    </alternativeName>
</protein>
<sequence>MDSFDLALLQEWDLESLCVYEPDRNALRRKERERRNQETQQDDGTFNSSYSLFSEPYKTNKGDELSNRIQNTLGNYDEMKDFLTDRSNQSHLVGVPKPGVPQTPVNKIDEHFVADSRAQNQPSSICSTTTSTPAAVPVQQSKRGTMGWQKAGHPPSDGQQRATQQGSLRTLLGDGVGRQQPRAKQVCNVEVGLQTQERPPAMAAKHSSSGHCVQNFPPSLASKPSLVQQKPTAYVRPMDGQDQAPDESPKLKSSSETSVHCTSYRGVPASKPEPARAKAKLSKFSIPKQGEESRSGETNSCVEEIIREMTWLPPLSAIQAPGKVEPTKFPFPNKDSQLVSSGHNNPKKGDAEPESPDNGTSNTSMLEDDLKLSSDEEENEQQAAQRTALRALSDSAVVQQPNCRTSVPSSKGSSSSSSSGSSSSSSDSESSSGSDSETESSSSESEGSKPPHFSSPEAEPASSNKWQLDKWLNKVNPHKPPILIQNESHGSESNQYYNPVKEDVQDCGKVPDVCQPSLREKEIKSTCKEEQRPRTANKAPGSKGVKQKSPPAAVAVAVSAAAPPPAVPCAPAENAPAPARRSAGKKPTRRTERTSAGDGANCHRPEEPAAADALGTSVVVPPEPTKTRPCGNNRASHRKELRSSVTCEKRRTRGLSRIVPKSKEFIETESSSSSSSSDSDLESEQEEYPLSKAQTVAASASSGNDQRLKEAAANGGSGPRAPVGSINARTTSDIAKELEEQFYTLVPFGRNELLSPLKDSDEIRSLWVKIDLTLLSRIPEHLPQEPGVLSAPATKDSESAPPSHTSDTPAEKALPKSKRKRKCDNEDDYREIKKSQGEKDSSSRLATSTSNTLSANHCNMNINSVAIPINKNEKMLRSPISPLSDASKHKYTSEDLTSSSRPNGNSLFTSASSSKKPKADSQLQPHGGDLTKAAHNNSENIPLHKSRPQTKPWSPGSNGHRDCKRQKLVFDDMPRSADYFMQEAKRMKHKADAMVEKFGKALNYAEAALSFIECGNAMEQGPMESKSPYTMYSETVELIRYAMRLKTHSGPNATPEDKQLAALCYRCLALLYWRMFRLKRDHAVKYSKALIDYFKNSSKAAQAPSPWGASGKSTGTPSPMSPNPSPASSVGSQGSLSNASALSPSTIVSIPQRIHQMAANHVSITNSILHSYDYWEMADNLAKENREFFNDLDLLMGPVTLHSSMEHLVQYSQQGLHWLRNSAHLS</sequence>
<evidence type="ECO:0000256" key="1">
    <source>
        <dbReference type="SAM" id="MobiDB-lite"/>
    </source>
</evidence>
<evidence type="ECO:0000269" key="2">
    <source>
    </source>
</evidence>
<evidence type="ECO:0000269" key="3">
    <source>
    </source>
</evidence>
<evidence type="ECO:0000269" key="4">
    <source>
    </source>
</evidence>
<evidence type="ECO:0000303" key="5">
    <source>
    </source>
</evidence>
<evidence type="ECO:0000303" key="6">
    <source>
    </source>
</evidence>
<evidence type="ECO:0000305" key="7"/>
<evidence type="ECO:0000312" key="8">
    <source>
        <dbReference type="HGNC" id="HGNC:6473"/>
    </source>
</evidence>
<evidence type="ECO:0007744" key="9">
    <source>
    </source>
</evidence>
<reference key="1">
    <citation type="journal article" date="1996" name="Blood">
        <title>LAF-4 encodes a lymphoid nuclear protein with transactivation potential that is homologous to AF-4, the gene fused to MLL in t(4;11) leukemias.</title>
        <authorList>
            <person name="Ma C."/>
            <person name="Staudt L.M."/>
        </authorList>
    </citation>
    <scope>NUCLEOTIDE SEQUENCE [MRNA] (ISOFORM 1)</scope>
</reference>
<reference key="2">
    <citation type="journal article" date="2005" name="Nature">
        <title>Generation and annotation of the DNA sequences of human chromosomes 2 and 4.</title>
        <authorList>
            <person name="Hillier L.W."/>
            <person name="Graves T.A."/>
            <person name="Fulton R.S."/>
            <person name="Fulton L.A."/>
            <person name="Pepin K.H."/>
            <person name="Minx P."/>
            <person name="Wagner-McPherson C."/>
            <person name="Layman D."/>
            <person name="Wylie K."/>
            <person name="Sekhon M."/>
            <person name="Becker M.C."/>
            <person name="Fewell G.A."/>
            <person name="Delehaunty K.D."/>
            <person name="Miner T.L."/>
            <person name="Nash W.E."/>
            <person name="Kremitzki C."/>
            <person name="Oddy L."/>
            <person name="Du H."/>
            <person name="Sun H."/>
            <person name="Bradshaw-Cordum H."/>
            <person name="Ali J."/>
            <person name="Carter J."/>
            <person name="Cordes M."/>
            <person name="Harris A."/>
            <person name="Isak A."/>
            <person name="van Brunt A."/>
            <person name="Nguyen C."/>
            <person name="Du F."/>
            <person name="Courtney L."/>
            <person name="Kalicki J."/>
            <person name="Ozersky P."/>
            <person name="Abbott S."/>
            <person name="Armstrong J."/>
            <person name="Belter E.A."/>
            <person name="Caruso L."/>
            <person name="Cedroni M."/>
            <person name="Cotton M."/>
            <person name="Davidson T."/>
            <person name="Desai A."/>
            <person name="Elliott G."/>
            <person name="Erb T."/>
            <person name="Fronick C."/>
            <person name="Gaige T."/>
            <person name="Haakenson W."/>
            <person name="Haglund K."/>
            <person name="Holmes A."/>
            <person name="Harkins R."/>
            <person name="Kim K."/>
            <person name="Kruchowski S.S."/>
            <person name="Strong C.M."/>
            <person name="Grewal N."/>
            <person name="Goyea E."/>
            <person name="Hou S."/>
            <person name="Levy A."/>
            <person name="Martinka S."/>
            <person name="Mead K."/>
            <person name="McLellan M.D."/>
            <person name="Meyer R."/>
            <person name="Randall-Maher J."/>
            <person name="Tomlinson C."/>
            <person name="Dauphin-Kohlberg S."/>
            <person name="Kozlowicz-Reilly A."/>
            <person name="Shah N."/>
            <person name="Swearengen-Shahid S."/>
            <person name="Snider J."/>
            <person name="Strong J.T."/>
            <person name="Thompson J."/>
            <person name="Yoakum M."/>
            <person name="Leonard S."/>
            <person name="Pearman C."/>
            <person name="Trani L."/>
            <person name="Radionenko M."/>
            <person name="Waligorski J.E."/>
            <person name="Wang C."/>
            <person name="Rock S.M."/>
            <person name="Tin-Wollam A.-M."/>
            <person name="Maupin R."/>
            <person name="Latreille P."/>
            <person name="Wendl M.C."/>
            <person name="Yang S.-P."/>
            <person name="Pohl C."/>
            <person name="Wallis J.W."/>
            <person name="Spieth J."/>
            <person name="Bieri T.A."/>
            <person name="Berkowicz N."/>
            <person name="Nelson J.O."/>
            <person name="Osborne J."/>
            <person name="Ding L."/>
            <person name="Meyer R."/>
            <person name="Sabo A."/>
            <person name="Shotland Y."/>
            <person name="Sinha P."/>
            <person name="Wohldmann P.E."/>
            <person name="Cook L.L."/>
            <person name="Hickenbotham M.T."/>
            <person name="Eldred J."/>
            <person name="Williams D."/>
            <person name="Jones T.A."/>
            <person name="She X."/>
            <person name="Ciccarelli F.D."/>
            <person name="Izaurralde E."/>
            <person name="Taylor J."/>
            <person name="Schmutz J."/>
            <person name="Myers R.M."/>
            <person name="Cox D.R."/>
            <person name="Huang X."/>
            <person name="McPherson J.D."/>
            <person name="Mardis E.R."/>
            <person name="Clifton S.W."/>
            <person name="Warren W.C."/>
            <person name="Chinwalla A.T."/>
            <person name="Eddy S.R."/>
            <person name="Marra M.A."/>
            <person name="Ovcharenko I."/>
            <person name="Furey T.S."/>
            <person name="Miller W."/>
            <person name="Eichler E.E."/>
            <person name="Bork P."/>
            <person name="Suyama M."/>
            <person name="Torrents D."/>
            <person name="Waterston R.H."/>
            <person name="Wilson R.K."/>
        </authorList>
    </citation>
    <scope>NUCLEOTIDE SEQUENCE [LARGE SCALE GENOMIC DNA]</scope>
</reference>
<reference key="3">
    <citation type="submission" date="2005-09" db="EMBL/GenBank/DDBJ databases">
        <authorList>
            <person name="Mural R.J."/>
            <person name="Istrail S."/>
            <person name="Sutton G.G."/>
            <person name="Florea L."/>
            <person name="Halpern A.L."/>
            <person name="Mobarry C.M."/>
            <person name="Lippert R."/>
            <person name="Walenz B."/>
            <person name="Shatkay H."/>
            <person name="Dew I."/>
            <person name="Miller J.R."/>
            <person name="Flanigan M.J."/>
            <person name="Edwards N.J."/>
            <person name="Bolanos R."/>
            <person name="Fasulo D."/>
            <person name="Halldorsson B.V."/>
            <person name="Hannenhalli S."/>
            <person name="Turner R."/>
            <person name="Yooseph S."/>
            <person name="Lu F."/>
            <person name="Nusskern D.R."/>
            <person name="Shue B.C."/>
            <person name="Zheng X.H."/>
            <person name="Zhong F."/>
            <person name="Delcher A.L."/>
            <person name="Huson D.H."/>
            <person name="Kravitz S.A."/>
            <person name="Mouchard L."/>
            <person name="Reinert K."/>
            <person name="Remington K.A."/>
            <person name="Clark A.G."/>
            <person name="Waterman M.S."/>
            <person name="Eichler E.E."/>
            <person name="Adams M.D."/>
            <person name="Hunkapiller M.W."/>
            <person name="Myers E.W."/>
            <person name="Venter J.C."/>
        </authorList>
    </citation>
    <scope>NUCLEOTIDE SEQUENCE [LARGE SCALE GENOMIC DNA]</scope>
</reference>
<reference key="4">
    <citation type="journal article" date="2004" name="Genome Res.">
        <title>The status, quality, and expansion of the NIH full-length cDNA project: the Mammalian Gene Collection (MGC).</title>
        <authorList>
            <consortium name="The MGC Project Team"/>
        </authorList>
    </citation>
    <scope>NUCLEOTIDE SEQUENCE [LARGE SCALE MRNA] (ISOFORMS 1 AND 2)</scope>
    <source>
        <tissue>Lymph</tissue>
        <tissue>Testis</tissue>
    </source>
</reference>
<reference key="5">
    <citation type="submission" date="2005-03" db="EMBL/GenBank/DDBJ databases">
        <authorList>
            <person name="Totoki Y."/>
            <person name="Toyoda A."/>
            <person name="Takeda T."/>
            <person name="Sakaki Y."/>
            <person name="Tanaka A."/>
            <person name="Yokoyama S."/>
            <person name="Ohara O."/>
            <person name="Nagase T."/>
            <person name="Kikuno R.F."/>
        </authorList>
    </citation>
    <scope>NUCLEOTIDE SEQUENCE [LARGE SCALE MRNA] OF 689-1226</scope>
    <source>
        <tissue>Spleen</tissue>
    </source>
</reference>
<reference key="6">
    <citation type="journal article" date="2008" name="Proc. Natl. Acad. Sci. U.S.A.">
        <title>A quantitative atlas of mitotic phosphorylation.</title>
        <authorList>
            <person name="Dephoure N."/>
            <person name="Zhou C."/>
            <person name="Villen J."/>
            <person name="Beausoleil S.A."/>
            <person name="Bakalarski C.E."/>
            <person name="Elledge S.J."/>
            <person name="Gygi S.P."/>
        </authorList>
    </citation>
    <scope>IDENTIFICATION BY MASS SPECTROMETRY [LARGE SCALE ANALYSIS]</scope>
    <source>
        <tissue>Cervix carcinoma</tissue>
    </source>
</reference>
<reference key="7">
    <citation type="journal article" date="2009" name="Mol. Cell. Proteomics">
        <title>Large-scale proteomics analysis of the human kinome.</title>
        <authorList>
            <person name="Oppermann F.S."/>
            <person name="Gnad F."/>
            <person name="Olsen J.V."/>
            <person name="Hornberger R."/>
            <person name="Greff Z."/>
            <person name="Keri G."/>
            <person name="Mann M."/>
            <person name="Daub H."/>
        </authorList>
    </citation>
    <scope>PHOSPHORYLATION [LARGE SCALE ANALYSIS] AT SER-755 AND SER-881</scope>
    <scope>IDENTIFICATION BY MASS SPECTROMETRY [LARGE SCALE ANALYSIS]</scope>
</reference>
<reference key="8">
    <citation type="journal article" date="2018" name="Mol. Psychiatry">
        <title>Mapping autosomal recessive intellectual disability: combined microarray and exome sequencing identifies 26 novel candidate genes in 192 consanguineous families.</title>
        <authorList>
            <person name="Harripaul R."/>
            <person name="Vasli N."/>
            <person name="Mikhailov A."/>
            <person name="Rafiq M.A."/>
            <person name="Mittal K."/>
            <person name="Windpassinger C."/>
            <person name="Sheikh T.I."/>
            <person name="Noor A."/>
            <person name="Mahmood H."/>
            <person name="Downey S."/>
            <person name="Johnson M."/>
            <person name="Vleuten K."/>
            <person name="Bell L."/>
            <person name="Ilyas M."/>
            <person name="Khan F.S."/>
            <person name="Khan V."/>
            <person name="Moradi M."/>
            <person name="Ayaz M."/>
            <person name="Naeem F."/>
            <person name="Heidari A."/>
            <person name="Ahmed I."/>
            <person name="Ghadami S."/>
            <person name="Agha Z."/>
            <person name="Zeinali S."/>
            <person name="Qamar R."/>
            <person name="Mozhdehipanah H."/>
            <person name="John P."/>
            <person name="Mir A."/>
            <person name="Ansar M."/>
            <person name="French L."/>
            <person name="Ayub M."/>
            <person name="Vincent J.B."/>
        </authorList>
    </citation>
    <scope>VARIANT VAL-1215</scope>
</reference>
<reference key="9">
    <citation type="journal article" date="2019" name="J. Hum. Genet.">
        <title>De novo AFF3 variant in a patient with mesomelic dysplasia with foot malformation.</title>
        <authorList>
            <person name="Shimizu D."/>
            <person name="Sakamoto R."/>
            <person name="Yamoto K."/>
            <person name="Saitsu H."/>
            <person name="Fukami M."/>
            <person name="Nishimura G."/>
            <person name="Ogata T."/>
        </authorList>
    </citation>
    <scope>VARIANT KINS THR-233</scope>
    <scope>INVOLVEMENT IN KINS</scope>
</reference>
<reference key="10">
    <citation type="journal article" date="2021" name="Am. J. Hum. Genet.">
        <title>Variants in the degron of AFF3 are associated with intellectual disability, mesomelic dysplasia, horseshoe kidney, and epileptic encephalopathy.</title>
        <authorList>
            <person name="Voisin N."/>
            <person name="Schnur R.E."/>
            <person name="Douzgou S."/>
            <person name="Hiatt S.M."/>
            <person name="Rustad C.F."/>
            <person name="Brown N.J."/>
            <person name="Earl D.L."/>
            <person name="Keren B."/>
            <person name="Levchenko O."/>
            <person name="Geuer S."/>
            <person name="Verheyen S."/>
            <person name="Johnson D."/>
            <person name="Zarate Y.A."/>
            <person name="Hancarova M."/>
            <person name="Amor D.J."/>
            <person name="Bebin E.M."/>
            <person name="Blatterer J."/>
            <person name="Brusco A."/>
            <person name="Cappuccio G."/>
            <person name="Charrow J."/>
            <person name="Chatron N."/>
            <person name="Cooper G.M."/>
            <person name="Courtin T."/>
            <person name="Dadali E."/>
            <person name="Delafontaine J."/>
            <person name="Del Giudice E."/>
            <person name="Doco M."/>
            <person name="Douglas G."/>
            <person name="Eisenkoelbl A."/>
            <person name="Funari T."/>
            <person name="Giannuzzi G."/>
            <person name="Gruber-Sedlmayr U."/>
            <person name="Guex N."/>
            <person name="Heron D."/>
            <person name="Holla O.L."/>
            <person name="Hurst A.C.E."/>
            <person name="Juusola J."/>
            <person name="Kronn D."/>
            <person name="Lavrov A."/>
            <person name="Lee C."/>
            <person name="Lorrain S."/>
            <person name="Merckoll E."/>
            <person name="Mikhaleva A."/>
            <person name="Norman J."/>
            <person name="Pradervand S."/>
            <person name="Prchalova D."/>
            <person name="Rhodes L."/>
            <person name="Sanders V.R."/>
            <person name="Sedlacek Z."/>
            <person name="Seebacher H.A."/>
            <person name="Sellars E.A."/>
            <person name="Sirchia F."/>
            <person name="Takenouchi T."/>
            <person name="Tanaka A.J."/>
            <person name="Taska-Tench H."/>
            <person name="Toenne E."/>
            <person name="Tveten K."/>
            <person name="Vitiello G."/>
            <person name="Vlckova M."/>
            <person name="Uehara T."/>
            <person name="Nava C."/>
            <person name="Yalcin B."/>
            <person name="Kosaki K."/>
            <person name="Donnai D."/>
            <person name="Mundlos S."/>
            <person name="Brunetti-Pierri N."/>
            <person name="Chung W.K."/>
            <person name="Reymond A."/>
        </authorList>
    </citation>
    <scope>VARIANTS KINS ALA-231; LEU-231; SER-233; THR-233; VAL-233 AND GLY-235</scope>
    <scope>INVOLVEMENT IN KINS</scope>
</reference>
<organism>
    <name type="scientific">Homo sapiens</name>
    <name type="common">Human</name>
    <dbReference type="NCBI Taxonomy" id="9606"/>
    <lineage>
        <taxon>Eukaryota</taxon>
        <taxon>Metazoa</taxon>
        <taxon>Chordata</taxon>
        <taxon>Craniata</taxon>
        <taxon>Vertebrata</taxon>
        <taxon>Euteleostomi</taxon>
        <taxon>Mammalia</taxon>
        <taxon>Eutheria</taxon>
        <taxon>Euarchontoglires</taxon>
        <taxon>Primates</taxon>
        <taxon>Haplorrhini</taxon>
        <taxon>Catarrhini</taxon>
        <taxon>Hominidae</taxon>
        <taxon>Homo</taxon>
    </lineage>
</organism>
<comment type="function">
    <text>Putative transcription activator that may function in lymphoid development and oncogenesis. Binds, in vitro, to double-stranded DNA.</text>
</comment>
<comment type="subcellular location">
    <subcellularLocation>
        <location>Nucleus</location>
    </subcellularLocation>
</comment>
<comment type="alternative products">
    <event type="alternative splicing"/>
    <isoform>
        <id>P51826-1</id>
        <name>1</name>
        <sequence type="displayed"/>
    </isoform>
    <isoform>
        <id>P51826-2</id>
        <name>2</name>
        <sequence type="described" ref="VSP_041120"/>
    </isoform>
</comment>
<comment type="tissue specificity">
    <text>Preferentially expressed in lymphoid tissues, highest levels being found in the thymus.</text>
</comment>
<comment type="disease" evidence="3 4">
    <disease id="DI-06095">
        <name>KINSSHIP syndrome</name>
        <acronym>KINS</acronym>
        <description>An autosomal dominant disease characterized by developmental delay, impaired intellectual development, seizures, short stature, mesomelic dysplasia, dysmorphic facial features, horseshoe or hypoplastic kidney, and failure to thrive.</description>
        <dbReference type="MIM" id="619297"/>
    </disease>
    <text>The disease is caused by variants affecting the gene represented in this entry.</text>
</comment>
<comment type="similarity">
    <text evidence="7">Belongs to the AF4 family.</text>
</comment>
<comment type="online information" name="Atlas of Genetics and Cytogenetics in Oncology and Haematology">
    <link uri="https://atlasgeneticsoncology.org/gene/315/LAF4"/>
</comment>